<evidence type="ECO:0000250" key="1">
    <source>
        <dbReference type="UniProtKB" id="P53026"/>
    </source>
</evidence>
<evidence type="ECO:0000250" key="2">
    <source>
        <dbReference type="UniProtKB" id="P62906"/>
    </source>
</evidence>
<evidence type="ECO:0000305" key="3"/>
<feature type="initiator methionine" description="Removed" evidence="2">
    <location>
        <position position="1"/>
    </location>
</feature>
<feature type="chain" id="PRO_0000125817" description="Large ribosomal subunit protein uL1">
    <location>
        <begin position="2"/>
        <end position="217"/>
    </location>
</feature>
<feature type="modified residue" description="N-acetylserine" evidence="2">
    <location>
        <position position="2"/>
    </location>
</feature>
<feature type="modified residue" description="Phosphotyrosine" evidence="1">
    <location>
        <position position="11"/>
    </location>
</feature>
<feature type="modified residue" description="N6-acetyllysine" evidence="1">
    <location>
        <position position="91"/>
    </location>
</feature>
<feature type="modified residue" description="N6-acetyllysine" evidence="2">
    <location>
        <position position="106"/>
    </location>
</feature>
<feature type="modified residue" description="N6-acetyllysine; alternate" evidence="2">
    <location>
        <position position="118"/>
    </location>
</feature>
<feature type="cross-link" description="Glycyl lysine isopeptide (Lys-Gly) (interchain with G-Cter in SUMO1); alternate" evidence="2">
    <location>
        <position position="118"/>
    </location>
</feature>
<feature type="cross-link" description="Glycyl lysine isopeptide (Lys-Gly) (interchain with G-Cter in SUMO2); alternate" evidence="2">
    <location>
        <position position="118"/>
    </location>
</feature>
<feature type="cross-link" description="Glycyl lysine isopeptide (Lys-Gly) (interchain with G-Cter in SUMO2)" evidence="2">
    <location>
        <position position="161"/>
    </location>
</feature>
<comment type="function">
    <text evidence="2">Component of the large ribosomal subunit. The ribosome is a large ribonucleoprotein complex responsible for the synthesis of proteins in the cell.</text>
</comment>
<comment type="subunit">
    <text evidence="2">Component of the large ribosomal subunit.</text>
</comment>
<comment type="subcellular location">
    <subcellularLocation>
        <location evidence="2">Cytoplasm</location>
    </subcellularLocation>
</comment>
<comment type="similarity">
    <text evidence="3">Belongs to the universal ribosomal protein uL1 family.</text>
</comment>
<name>RL10A_BOVIN</name>
<dbReference type="EMBL" id="BT020974">
    <property type="protein sequence ID" value="AAX08991.1"/>
    <property type="molecule type" value="mRNA"/>
</dbReference>
<dbReference type="EMBL" id="BC102653">
    <property type="protein sequence ID" value="AAI02654.1"/>
    <property type="molecule type" value="mRNA"/>
</dbReference>
<dbReference type="RefSeq" id="NP_001015647.1">
    <property type="nucleotide sequence ID" value="NM_001015647.1"/>
</dbReference>
<dbReference type="SMR" id="Q5E9E6"/>
<dbReference type="FunCoup" id="Q5E9E6">
    <property type="interactions" value="2333"/>
</dbReference>
<dbReference type="STRING" id="9913.ENSBTAP00000025963"/>
<dbReference type="PaxDb" id="9913-ENSBTAP00000025963"/>
<dbReference type="PeptideAtlas" id="Q5E9E6"/>
<dbReference type="GeneID" id="533310"/>
<dbReference type="KEGG" id="bta:533310"/>
<dbReference type="CTD" id="4736"/>
<dbReference type="VEuPathDB" id="HostDB:ENSBTAG00000019494"/>
<dbReference type="eggNOG" id="KOG1570">
    <property type="taxonomic scope" value="Eukaryota"/>
</dbReference>
<dbReference type="HOGENOM" id="CLU_062853_3_0_1"/>
<dbReference type="InParanoid" id="Q5E9E6"/>
<dbReference type="OMA" id="GPRNKMP"/>
<dbReference type="OrthoDB" id="2449818at2759"/>
<dbReference type="TreeFam" id="TF300791"/>
<dbReference type="Reactome" id="R-BTA-156827">
    <property type="pathway name" value="L13a-mediated translational silencing of Ceruloplasmin expression"/>
</dbReference>
<dbReference type="Reactome" id="R-BTA-1799339">
    <property type="pathway name" value="SRP-dependent cotranslational protein targeting to membrane"/>
</dbReference>
<dbReference type="Reactome" id="R-BTA-6791226">
    <property type="pathway name" value="Major pathway of rRNA processing in the nucleolus and cytosol"/>
</dbReference>
<dbReference type="Reactome" id="R-BTA-72689">
    <property type="pathway name" value="Formation of a pool of free 40S subunits"/>
</dbReference>
<dbReference type="Reactome" id="R-BTA-72706">
    <property type="pathway name" value="GTP hydrolysis and joining of the 60S ribosomal subunit"/>
</dbReference>
<dbReference type="Reactome" id="R-BTA-975956">
    <property type="pathway name" value="Nonsense Mediated Decay (NMD) independent of the Exon Junction Complex (EJC)"/>
</dbReference>
<dbReference type="Reactome" id="R-BTA-975957">
    <property type="pathway name" value="Nonsense Mediated Decay (NMD) enhanced by the Exon Junction Complex (EJC)"/>
</dbReference>
<dbReference type="CD-CODE" id="D7FE2080">
    <property type="entry name" value="Nucleolus"/>
</dbReference>
<dbReference type="Proteomes" id="UP000009136">
    <property type="component" value="Chromosome 23"/>
</dbReference>
<dbReference type="Bgee" id="ENSBTAG00000019494">
    <property type="expression patterns" value="Expressed in isthmus of fallopian tube and 104 other cell types or tissues"/>
</dbReference>
<dbReference type="GO" id="GO:0022625">
    <property type="term" value="C:cytosolic large ribosomal subunit"/>
    <property type="evidence" value="ECO:0000318"/>
    <property type="project" value="GO_Central"/>
</dbReference>
<dbReference type="GO" id="GO:0003723">
    <property type="term" value="F:RNA binding"/>
    <property type="evidence" value="ECO:0000318"/>
    <property type="project" value="GO_Central"/>
</dbReference>
<dbReference type="GO" id="GO:0003735">
    <property type="term" value="F:structural constituent of ribosome"/>
    <property type="evidence" value="ECO:0007669"/>
    <property type="project" value="InterPro"/>
</dbReference>
<dbReference type="GO" id="GO:0006412">
    <property type="term" value="P:translation"/>
    <property type="evidence" value="ECO:0007669"/>
    <property type="project" value="InterPro"/>
</dbReference>
<dbReference type="CDD" id="cd00403">
    <property type="entry name" value="Ribosomal_L1"/>
    <property type="match status" value="1"/>
</dbReference>
<dbReference type="FunFam" id="3.30.190.20:FF:000006">
    <property type="entry name" value="Ribosomal protein"/>
    <property type="match status" value="1"/>
</dbReference>
<dbReference type="FunFam" id="3.40.50.790:FF:000002">
    <property type="entry name" value="Ribosomal protein"/>
    <property type="match status" value="1"/>
</dbReference>
<dbReference type="FunFam" id="3.30.190.20:FF:000009">
    <property type="entry name" value="Ribosomal protein L10a"/>
    <property type="match status" value="1"/>
</dbReference>
<dbReference type="Gene3D" id="3.30.190.20">
    <property type="match status" value="1"/>
</dbReference>
<dbReference type="Gene3D" id="3.40.50.790">
    <property type="match status" value="1"/>
</dbReference>
<dbReference type="InterPro" id="IPR050257">
    <property type="entry name" value="eL8/uL1-like"/>
</dbReference>
<dbReference type="InterPro" id="IPR002143">
    <property type="entry name" value="Ribosomal_uL1"/>
</dbReference>
<dbReference type="InterPro" id="IPR023674">
    <property type="entry name" value="Ribosomal_uL1-like"/>
</dbReference>
<dbReference type="InterPro" id="IPR028364">
    <property type="entry name" value="Ribosomal_uL1/biogenesis"/>
</dbReference>
<dbReference type="InterPro" id="IPR016095">
    <property type="entry name" value="Ribosomal_uL1_3-a/b-sand"/>
</dbReference>
<dbReference type="InterPro" id="IPR023673">
    <property type="entry name" value="Ribosomal_uL1_CS"/>
</dbReference>
<dbReference type="PANTHER" id="PTHR23105">
    <property type="entry name" value="RIBOSOMAL PROTEIN L7AE FAMILY MEMBER"/>
    <property type="match status" value="1"/>
</dbReference>
<dbReference type="Pfam" id="PF00687">
    <property type="entry name" value="Ribosomal_L1"/>
    <property type="match status" value="1"/>
</dbReference>
<dbReference type="PIRSF" id="PIRSF002155">
    <property type="entry name" value="Ribosomal_L1"/>
    <property type="match status" value="1"/>
</dbReference>
<dbReference type="SUPFAM" id="SSF56808">
    <property type="entry name" value="Ribosomal protein L1"/>
    <property type="match status" value="1"/>
</dbReference>
<dbReference type="PROSITE" id="PS01199">
    <property type="entry name" value="RIBOSOMAL_L1"/>
    <property type="match status" value="1"/>
</dbReference>
<accession>Q5E9E6</accession>
<accession>Q3SZY5</accession>
<proteinExistence type="evidence at transcript level"/>
<organism>
    <name type="scientific">Bos taurus</name>
    <name type="common">Bovine</name>
    <dbReference type="NCBI Taxonomy" id="9913"/>
    <lineage>
        <taxon>Eukaryota</taxon>
        <taxon>Metazoa</taxon>
        <taxon>Chordata</taxon>
        <taxon>Craniata</taxon>
        <taxon>Vertebrata</taxon>
        <taxon>Euteleostomi</taxon>
        <taxon>Mammalia</taxon>
        <taxon>Eutheria</taxon>
        <taxon>Laurasiatheria</taxon>
        <taxon>Artiodactyla</taxon>
        <taxon>Ruminantia</taxon>
        <taxon>Pecora</taxon>
        <taxon>Bovidae</taxon>
        <taxon>Bovinae</taxon>
        <taxon>Bos</taxon>
    </lineage>
</organism>
<keyword id="KW-0007">Acetylation</keyword>
<keyword id="KW-0963">Cytoplasm</keyword>
<keyword id="KW-1017">Isopeptide bond</keyword>
<keyword id="KW-0597">Phosphoprotein</keyword>
<keyword id="KW-1185">Reference proteome</keyword>
<keyword id="KW-0687">Ribonucleoprotein</keyword>
<keyword id="KW-0689">Ribosomal protein</keyword>
<keyword id="KW-0832">Ubl conjugation</keyword>
<protein>
    <recommendedName>
        <fullName evidence="3">Large ribosomal subunit protein uL1</fullName>
    </recommendedName>
    <alternativeName>
        <fullName>60S ribosomal protein L10a</fullName>
    </alternativeName>
</protein>
<sequence>MSSKVSRDTLYEAVREVLHGNQRKRRKFLETVELQISLKNYDPQKDKRFSGTVRLKSTPRPKFSVCVLGDQQHCDEAKAVDIPHMDIEALKKLNKNKKLVKKLAKKYDAFLASESLIKQIPRILGPGLNKAGKFPSLLTHNENMVAKVDEVKSTIKFQMKKVLCLAVAVGHVKMTDDELVYNIHLAVNFLVSLLKKNWQNVRALYIKSTMGKPQRLY</sequence>
<reference key="1">
    <citation type="journal article" date="2005" name="BMC Genomics">
        <title>Characterization of 954 bovine full-CDS cDNA sequences.</title>
        <authorList>
            <person name="Harhay G.P."/>
            <person name="Sonstegard T.S."/>
            <person name="Keele J.W."/>
            <person name="Heaton M.P."/>
            <person name="Clawson M.L."/>
            <person name="Snelling W.M."/>
            <person name="Wiedmann R.T."/>
            <person name="Van Tassell C.P."/>
            <person name="Smith T.P.L."/>
        </authorList>
    </citation>
    <scope>NUCLEOTIDE SEQUENCE [LARGE SCALE MRNA]</scope>
</reference>
<reference key="2">
    <citation type="submission" date="2005-08" db="EMBL/GenBank/DDBJ databases">
        <authorList>
            <consortium name="NIH - Mammalian Gene Collection (MGC) project"/>
        </authorList>
    </citation>
    <scope>NUCLEOTIDE SEQUENCE [LARGE SCALE MRNA]</scope>
    <source>
        <strain>Crossbred X Angus</strain>
        <tissue>Liver</tissue>
    </source>
</reference>
<gene>
    <name type="primary">RPL10A</name>
</gene>